<reference key="1">
    <citation type="journal article" date="2001" name="Nature">
        <title>Complete genome sequence of Salmonella enterica serovar Typhimurium LT2.</title>
        <authorList>
            <person name="McClelland M."/>
            <person name="Sanderson K.E."/>
            <person name="Spieth J."/>
            <person name="Clifton S.W."/>
            <person name="Latreille P."/>
            <person name="Courtney L."/>
            <person name="Porwollik S."/>
            <person name="Ali J."/>
            <person name="Dante M."/>
            <person name="Du F."/>
            <person name="Hou S."/>
            <person name="Layman D."/>
            <person name="Leonard S."/>
            <person name="Nguyen C."/>
            <person name="Scott K."/>
            <person name="Holmes A."/>
            <person name="Grewal N."/>
            <person name="Mulvaney E."/>
            <person name="Ryan E."/>
            <person name="Sun H."/>
            <person name="Florea L."/>
            <person name="Miller W."/>
            <person name="Stoneking T."/>
            <person name="Nhan M."/>
            <person name="Waterston R."/>
            <person name="Wilson R.K."/>
        </authorList>
    </citation>
    <scope>NUCLEOTIDE SEQUENCE [LARGE SCALE GENOMIC DNA]</scope>
    <source>
        <strain>LT2 / SGSC1412 / ATCC 700720</strain>
    </source>
</reference>
<reference key="2">
    <citation type="journal article" date="2004" name="J. Mol. Biol.">
        <title>Identification of the protein acetyltransferase (Pat) enzyme that acetylates acetyl-CoA synthetase in Salmonella enterica.</title>
        <authorList>
            <person name="Starai V.J."/>
            <person name="Escalante-Semerena J.C."/>
        </authorList>
    </citation>
    <scope>FUNCTION IN ACETYLATION OF ACS</scope>
    <scope>CATALYTIC ACTIVITY</scope>
    <scope>GENE NAME</scope>
    <source>
        <strain>LT2</strain>
    </source>
</reference>
<reference key="3">
    <citation type="journal article" date="2010" name="Science">
        <title>Acetylation of metabolic enzymes coordinates carbon source utilization and metabolic flux.</title>
        <authorList>
            <person name="Wang Q."/>
            <person name="Zhang Y."/>
            <person name="Yang C."/>
            <person name="Xiong H."/>
            <person name="Lin Y."/>
            <person name="Yao J."/>
            <person name="Li H."/>
            <person name="Xie L."/>
            <person name="Zhao W."/>
            <person name="Yao Y."/>
            <person name="Ning Z.B."/>
            <person name="Zeng R."/>
            <person name="Xiong Y."/>
            <person name="Guan K.L."/>
            <person name="Zhao S."/>
            <person name="Zhao G.P."/>
        </authorList>
    </citation>
    <scope>FUNCTION</scope>
</reference>
<reference key="4">
    <citation type="journal article" date="2011" name="MBio">
        <title>Biochemical and thermodynamic analyses of Salmonella enterica Pat, a multidomain, multimeric N(epsilon)-lysine acetyltransferase involved in carbon and energy metabolism.</title>
        <authorList>
            <person name="Thao S."/>
            <person name="Escalante-Semerena J.C."/>
        </authorList>
    </citation>
    <scope>FUNCTION</scope>
    <scope>CATALYTIC ACTIVITY</scope>
    <scope>ACTIVITY REGULATION</scope>
    <scope>BIOPHYSICOCHEMICAL PROPERTIES</scope>
    <scope>SUBUNIT</scope>
</reference>
<reference key="5">
    <citation type="journal article" date="2012" name="Res. Microbiol.">
        <title>A positive selection approach identifies residues important for folding of Salmonella enterica Pat, an N(epsilon)-lysine acetyltransferase that regulates central metabolism enzymes.</title>
        <authorList>
            <person name="Thao S."/>
            <person name="Escalante-Semerena J.C."/>
        </authorList>
    </citation>
    <scope>MUTAGENESIS OF ASP-165; ARG-170; ALA-220; ARG-450; ASP-592; ALA-780 AND ALA-811</scope>
    <source>
        <strain>LT2</strain>
    </source>
</reference>
<keyword id="KW-0012">Acyltransferase</keyword>
<keyword id="KW-0067">ATP-binding</keyword>
<keyword id="KW-0547">Nucleotide-binding</keyword>
<keyword id="KW-1185">Reference proteome</keyword>
<keyword id="KW-0808">Transferase</keyword>
<name>LYSAC_SALTY</name>
<gene>
    <name type="primary">pat</name>
    <name type="synonym">yfiQ</name>
    <name type="ordered locus">STM2651</name>
</gene>
<protein>
    <recommendedName>
        <fullName evidence="7">Peptidyl-lysine N-acetyltransferase Pat</fullName>
        <ecNumber evidence="3 5">2.3.1.-</ecNumber>
    </recommendedName>
    <alternativeName>
        <fullName evidence="7">Protein lysine acetyltransferase</fullName>
    </alternativeName>
</protein>
<dbReference type="EC" id="2.3.1.-" evidence="3 5"/>
<dbReference type="EMBL" id="AE006468">
    <property type="protein sequence ID" value="AAL21545.1"/>
    <property type="molecule type" value="Genomic_DNA"/>
</dbReference>
<dbReference type="RefSeq" id="NP_461586.1">
    <property type="nucleotide sequence ID" value="NC_003197.2"/>
</dbReference>
<dbReference type="RefSeq" id="WP_000082639.1">
    <property type="nucleotide sequence ID" value="NC_003197.2"/>
</dbReference>
<dbReference type="SMR" id="Q8ZMX2"/>
<dbReference type="DIP" id="DIP-61211N"/>
<dbReference type="IntAct" id="Q8ZMX2">
    <property type="interactions" value="2"/>
</dbReference>
<dbReference type="STRING" id="99287.STM2651"/>
<dbReference type="PaxDb" id="99287-STM2651"/>
<dbReference type="GeneID" id="1254174"/>
<dbReference type="KEGG" id="stm:STM2651"/>
<dbReference type="PATRIC" id="fig|99287.12.peg.2801"/>
<dbReference type="HOGENOM" id="CLU_007415_0_2_6"/>
<dbReference type="OMA" id="IVIYMES"/>
<dbReference type="PhylomeDB" id="Q8ZMX2"/>
<dbReference type="BioCyc" id="SENT99287:STM2651-MONOMER"/>
<dbReference type="BRENDA" id="2.3.1.B34">
    <property type="organism ID" value="5542"/>
</dbReference>
<dbReference type="PHI-base" id="PHI:5571"/>
<dbReference type="PHI-base" id="PHI:6366"/>
<dbReference type="Proteomes" id="UP000001014">
    <property type="component" value="Chromosome"/>
</dbReference>
<dbReference type="GO" id="GO:0005524">
    <property type="term" value="F:ATP binding"/>
    <property type="evidence" value="ECO:0007669"/>
    <property type="project" value="UniProtKB-KW"/>
</dbReference>
<dbReference type="GO" id="GO:0046872">
    <property type="term" value="F:metal ion binding"/>
    <property type="evidence" value="ECO:0007669"/>
    <property type="project" value="InterPro"/>
</dbReference>
<dbReference type="GO" id="GO:0061733">
    <property type="term" value="F:protein-lysine-acetyltransferase activity"/>
    <property type="evidence" value="ECO:0007669"/>
    <property type="project" value="RHEA"/>
</dbReference>
<dbReference type="CDD" id="cd04301">
    <property type="entry name" value="NAT_SF"/>
    <property type="match status" value="1"/>
</dbReference>
<dbReference type="FunFam" id="3.30.1490.20:FF:000020">
    <property type="entry name" value="Protein lysine acetyltransferase"/>
    <property type="match status" value="1"/>
</dbReference>
<dbReference type="FunFam" id="3.40.50.261:FF:000009">
    <property type="entry name" value="Protein lysine acetyltransferase"/>
    <property type="match status" value="1"/>
</dbReference>
<dbReference type="Gene3D" id="3.40.630.30">
    <property type="match status" value="1"/>
</dbReference>
<dbReference type="Gene3D" id="3.30.1490.20">
    <property type="entry name" value="ATP-grasp fold, A domain"/>
    <property type="match status" value="1"/>
</dbReference>
<dbReference type="Gene3D" id="3.30.470.20">
    <property type="entry name" value="ATP-grasp fold, B domain"/>
    <property type="match status" value="1"/>
</dbReference>
<dbReference type="Gene3D" id="3.40.50.720">
    <property type="entry name" value="NAD(P)-binding Rossmann-like Domain"/>
    <property type="match status" value="1"/>
</dbReference>
<dbReference type="Gene3D" id="3.40.50.261">
    <property type="entry name" value="Succinyl-CoA synthetase domains"/>
    <property type="match status" value="2"/>
</dbReference>
<dbReference type="InterPro" id="IPR016181">
    <property type="entry name" value="Acyl_CoA_acyltransferase"/>
</dbReference>
<dbReference type="InterPro" id="IPR011761">
    <property type="entry name" value="ATP-grasp"/>
</dbReference>
<dbReference type="InterPro" id="IPR013815">
    <property type="entry name" value="ATP_grasp_subdomain_1"/>
</dbReference>
<dbReference type="InterPro" id="IPR003781">
    <property type="entry name" value="CoA-bd"/>
</dbReference>
<dbReference type="InterPro" id="IPR000182">
    <property type="entry name" value="GNAT_dom"/>
</dbReference>
<dbReference type="InterPro" id="IPR036291">
    <property type="entry name" value="NAD(P)-bd_dom_sf"/>
</dbReference>
<dbReference type="InterPro" id="IPR032875">
    <property type="entry name" value="Succ_CoA_lig_flav_dom"/>
</dbReference>
<dbReference type="InterPro" id="IPR016102">
    <property type="entry name" value="Succinyl-CoA_synth-like"/>
</dbReference>
<dbReference type="PANTHER" id="PTHR42793">
    <property type="entry name" value="COA BINDING DOMAIN CONTAINING PROTEIN"/>
    <property type="match status" value="1"/>
</dbReference>
<dbReference type="PANTHER" id="PTHR42793:SF1">
    <property type="entry name" value="PEPTIDYL-LYSINE N-ACETYLTRANSFERASE PATZ"/>
    <property type="match status" value="1"/>
</dbReference>
<dbReference type="Pfam" id="PF00583">
    <property type="entry name" value="Acetyltransf_1"/>
    <property type="match status" value="1"/>
</dbReference>
<dbReference type="Pfam" id="PF13549">
    <property type="entry name" value="ATP-grasp_5"/>
    <property type="match status" value="1"/>
</dbReference>
<dbReference type="Pfam" id="PF13380">
    <property type="entry name" value="CoA_binding_2"/>
    <property type="match status" value="1"/>
</dbReference>
<dbReference type="Pfam" id="PF13607">
    <property type="entry name" value="Succ_CoA_lig"/>
    <property type="match status" value="1"/>
</dbReference>
<dbReference type="SMART" id="SM00881">
    <property type="entry name" value="CoA_binding"/>
    <property type="match status" value="1"/>
</dbReference>
<dbReference type="SUPFAM" id="SSF55729">
    <property type="entry name" value="Acyl-CoA N-acyltransferases (Nat)"/>
    <property type="match status" value="1"/>
</dbReference>
<dbReference type="SUPFAM" id="SSF56059">
    <property type="entry name" value="Glutathione synthetase ATP-binding domain-like"/>
    <property type="match status" value="1"/>
</dbReference>
<dbReference type="SUPFAM" id="SSF51735">
    <property type="entry name" value="NAD(P)-binding Rossmann-fold domains"/>
    <property type="match status" value="1"/>
</dbReference>
<dbReference type="SUPFAM" id="SSF52210">
    <property type="entry name" value="Succinyl-CoA synthetase domains"/>
    <property type="match status" value="2"/>
</dbReference>
<dbReference type="PROSITE" id="PS50975">
    <property type="entry name" value="ATP_GRASP"/>
    <property type="match status" value="1"/>
</dbReference>
<dbReference type="PROSITE" id="PS51186">
    <property type="entry name" value="GNAT"/>
    <property type="match status" value="1"/>
</dbReference>
<evidence type="ECO:0000255" key="1">
    <source>
        <dbReference type="PROSITE-ProRule" id="PRU00409"/>
    </source>
</evidence>
<evidence type="ECO:0000255" key="2">
    <source>
        <dbReference type="PROSITE-ProRule" id="PRU00532"/>
    </source>
</evidence>
<evidence type="ECO:0000269" key="3">
    <source>
    </source>
</evidence>
<evidence type="ECO:0000269" key="4">
    <source>
    </source>
</evidence>
<evidence type="ECO:0000269" key="5">
    <source>
    </source>
</evidence>
<evidence type="ECO:0000269" key="6">
    <source>
    </source>
</evidence>
<evidence type="ECO:0000305" key="7"/>
<accession>Q8ZMX2</accession>
<feature type="chain" id="PRO_0000430414" description="Peptidyl-lysine N-acetyltransferase Pat">
    <location>
        <begin position="1"/>
        <end position="886"/>
    </location>
</feature>
<feature type="domain" description="ATP-grasp" evidence="1">
    <location>
        <begin position="487"/>
        <end position="523"/>
    </location>
</feature>
<feature type="domain" description="N-acetyltransferase" evidence="2">
    <location>
        <begin position="726"/>
        <end position="881"/>
    </location>
</feature>
<feature type="binding site" evidence="1">
    <location>
        <begin position="513"/>
        <end position="524"/>
    </location>
    <ligand>
        <name>ATP</name>
        <dbReference type="ChEBI" id="CHEBI:30616"/>
    </ligand>
</feature>
<feature type="mutagenesis site" description="Almost loss of activity. Decreases helical content of the protein." evidence="6">
    <original>D</original>
    <variation>N</variation>
    <location>
        <position position="165"/>
    </location>
</feature>
<feature type="mutagenesis site" description="Strong decrease in activity. Small decrease in the helical content of the protein." evidence="6">
    <original>R</original>
    <variation>H</variation>
    <location>
        <position position="170"/>
    </location>
</feature>
<feature type="mutagenesis site" description="Almost loss of activity. Decreases helical content of the protein." evidence="6">
    <original>A</original>
    <variation>T</variation>
    <location>
        <position position="220"/>
    </location>
</feature>
<feature type="mutagenesis site" description="Almost loss of activity. Decreases helical content of the protein." evidence="6">
    <original>R</original>
    <variation>W</variation>
    <location>
        <position position="450"/>
    </location>
</feature>
<feature type="mutagenesis site" description="Almost loss of activity. Decreases helical content of the protein." evidence="6">
    <original>D</original>
    <variation>N</variation>
    <location>
        <position position="592"/>
    </location>
</feature>
<feature type="mutagenesis site" description="Almost loss of activity. Decreases helical content of the protein." evidence="6">
    <original>A</original>
    <variation>T</variation>
    <variation>V</variation>
    <location>
        <position position="780"/>
    </location>
</feature>
<feature type="mutagenesis site" description="Almost loss of activity. Decreases helical content of the protein." evidence="6">
    <original>A</original>
    <variation>V</variation>
    <location>
        <position position="811"/>
    </location>
</feature>
<comment type="function">
    <text evidence="3 4 5">Acetylates and inactivates the acetyl-CoA synthase (Acs). Can also acetylate other central metabolic enzymes in response to environmental changes.</text>
</comment>
<comment type="catalytic activity">
    <reaction evidence="3 5">
        <text>L-lysyl-[protein] + acetyl-CoA = N(6)-acetyl-L-lysyl-[protein] + CoA + H(+)</text>
        <dbReference type="Rhea" id="RHEA:45948"/>
        <dbReference type="Rhea" id="RHEA-COMP:9752"/>
        <dbReference type="Rhea" id="RHEA-COMP:10731"/>
        <dbReference type="ChEBI" id="CHEBI:15378"/>
        <dbReference type="ChEBI" id="CHEBI:29969"/>
        <dbReference type="ChEBI" id="CHEBI:57287"/>
        <dbReference type="ChEBI" id="CHEBI:57288"/>
        <dbReference type="ChEBI" id="CHEBI:61930"/>
    </reaction>
</comment>
<comment type="activity regulation">
    <text evidence="5">Exhibits positive cooperativity. It may be the result of acetyl-CoA binding to two distinct sites, or the result of subunit interactions.</text>
</comment>
<comment type="biophysicochemical properties">
    <kinetics>
        <KM evidence="5">132 uM for Acs</KM>
        <Vmax evidence="5">4.9 umol/min/mg enzyme toward Acs</Vmax>
        <Vmax evidence="5">2.7 umol/min/mg enzyme toward acetly-CoA</Vmax>
        <text>Kinetic analysis use an approximately 15-kDa truncated C-terminal construct of Acs.</text>
    </kinetics>
</comment>
<comment type="subunit">
    <text evidence="5">Monomer in the absence of acetyl-CoA. Oligomerizes to a tetrameric form in the presence of acetyl-CoA.</text>
</comment>
<comment type="similarity">
    <text evidence="7">In the N-terminal section; belongs to the acetate CoA ligase alpha subunit family.</text>
</comment>
<comment type="similarity">
    <text evidence="7">In the central section; belongs to the acetate CoA ligase beta subunit family.</text>
</comment>
<sequence>MSQQGLEALLRPKSIAVIGASMKPHRAGYLMMRNLLAGGFNGPVLPVTPAWKAVLGVMAWPDIASLPFTPDLAILCTNASRNLALLDALGAKGCKTCIILSAPTSQHEELLACARHYKMRLLGPNSLGLLAPWQGLNASFSPVPIKQGKLAFISQSAAVSNTILDWAQQREMGFSYFIALGDSLDIDVDELLDYLARDSKTSAILLYLEQLSDARRFVSAARSASRNKPILVIKSGRSPAAQRLLNTSAGMDPAWDAAIQRAGLLRVQDTHELFSAVETLSHMRPLRGDRLMIISNGAAPAALALDELWSRNGKLATLSEETCLQLRQALPAHIDIANPLDLCDDASSEHYVKTLDILLASQDFDALMVIHSPSAAAPGTESAHALIETIKRHPRGKFVTLLTNWCGEFSSQEARRLFSEAGLPTYRTPEGTITAFMHMVEYRRNQKQLRETPALPSNLTSNTAEAHNLLQRAIAEGAASLDTHEVQPILHAYGLHTLPTWIASDSAEAVHIAEQIGYPVALKLRSPDIPHKSEVQGVMLYLRTASEVQQAANAIFDRVKMAWPQARIHGLLVQSMANRAGAQELRVVVEHDPVFGPLIMLGEGGVEWRPEEQAVVALPPLNMNLARYLVIQGIKQRKIRARSALRPLDIVGLSQLLVQVSNLIVDCPEIQRLDIHPLLASASEFTALDVTLDIAPFDGDNESRLAVRPYPHQLEEWVEMKNGDRCLFRPILPEDEPQLRQFIAQVTKEDLYYRYFSEINEFTHEDLANMTQIDYDREMAFVAVRRMDNAEEILGVTRAISDPDNVDAEFAVLVRSDLKGLGLGRRLMEKLIAYTRDHGLKRLNGITMPNNRGMVALARKLGFQVDIQLEEGIVGLTLNLAKCDES</sequence>
<organism>
    <name type="scientific">Salmonella typhimurium (strain LT2 / SGSC1412 / ATCC 700720)</name>
    <dbReference type="NCBI Taxonomy" id="99287"/>
    <lineage>
        <taxon>Bacteria</taxon>
        <taxon>Pseudomonadati</taxon>
        <taxon>Pseudomonadota</taxon>
        <taxon>Gammaproteobacteria</taxon>
        <taxon>Enterobacterales</taxon>
        <taxon>Enterobacteriaceae</taxon>
        <taxon>Salmonella</taxon>
    </lineage>
</organism>
<proteinExistence type="evidence at protein level"/>